<sequence>MRIGVLTGGGDCPGLNAVIRAVVRTCHARYGSSVVGFQNGFRGLLENRRVQLHNDDRNDRLLAKGGTMLGTARVHPDKLRAGLPQIMQTLDDNGIDVLIPIGGEGTLTAASWLSEENVPVVGVPKTIDNDIDCTDVTFGHDTALTVATEAIDRLHSTAESHERVMLVEVMGRHAGWIALNAGLASGAHMTLIPEQPFDIEEVCRLVKGRFQRGDSHFICVVAEGAKPAPGTIMLREGGLDEFGHERFTGVAAQLAVEVEKRINKDVRVTVLGHIQRGGTPTAYDRVLATRFGVNAADAAHAGEYGQMVTLRGQDIGRVPLADAVRKLKLVPQSRYDDAAAFFG</sequence>
<protein>
    <recommendedName>
        <fullName evidence="2">ATP-dependent 6-phosphofructokinase</fullName>
        <shortName evidence="2">ATP-PFK</shortName>
        <shortName evidence="2">Phosphofructokinase</shortName>
        <ecNumber evidence="2">2.7.1.11</ecNumber>
    </recommendedName>
    <alternativeName>
        <fullName evidence="1">Phosphofructokinase A</fullName>
    </alternativeName>
    <alternativeName>
        <fullName evidence="2">Phosphohexokinase</fullName>
    </alternativeName>
    <alternativeName>
        <fullName evidence="1">Tagatose-6-phosphate kinase</fullName>
        <ecNumber evidence="1">2.7.1.144</ecNumber>
    </alternativeName>
</protein>
<keyword id="KW-0067">ATP-binding</keyword>
<keyword id="KW-0963">Cytoplasm</keyword>
<keyword id="KW-0324">Glycolysis</keyword>
<keyword id="KW-0418">Kinase</keyword>
<keyword id="KW-0460">Magnesium</keyword>
<keyword id="KW-0479">Metal-binding</keyword>
<keyword id="KW-0547">Nucleotide-binding</keyword>
<keyword id="KW-1185">Reference proteome</keyword>
<keyword id="KW-0808">Transferase</keyword>
<gene>
    <name evidence="2" type="primary">pfkA</name>
    <name type="ordered locus">MT3090</name>
</gene>
<evidence type="ECO:0000250" key="1">
    <source>
        <dbReference type="UniProtKB" id="P9WID7"/>
    </source>
</evidence>
<evidence type="ECO:0000255" key="2">
    <source>
        <dbReference type="HAMAP-Rule" id="MF_01976"/>
    </source>
</evidence>
<organism>
    <name type="scientific">Mycobacterium tuberculosis (strain CDC 1551 / Oshkosh)</name>
    <dbReference type="NCBI Taxonomy" id="83331"/>
    <lineage>
        <taxon>Bacteria</taxon>
        <taxon>Bacillati</taxon>
        <taxon>Actinomycetota</taxon>
        <taxon>Actinomycetes</taxon>
        <taxon>Mycobacteriales</taxon>
        <taxon>Mycobacteriaceae</taxon>
        <taxon>Mycobacterium</taxon>
        <taxon>Mycobacterium tuberculosis complex</taxon>
    </lineage>
</organism>
<name>PFKA_MYCTO</name>
<feature type="chain" id="PRO_0000428025" description="ATP-dependent 6-phosphofructokinase">
    <location>
        <begin position="1"/>
        <end position="343"/>
    </location>
</feature>
<feature type="active site" description="Proton acceptor" evidence="2">
    <location>
        <position position="128"/>
    </location>
</feature>
<feature type="binding site" evidence="2">
    <location>
        <position position="10"/>
    </location>
    <ligand>
        <name>ATP</name>
        <dbReference type="ChEBI" id="CHEBI:30616"/>
    </ligand>
</feature>
<feature type="binding site" evidence="2">
    <location>
        <begin position="73"/>
        <end position="74"/>
    </location>
    <ligand>
        <name>ATP</name>
        <dbReference type="ChEBI" id="CHEBI:30616"/>
    </ligand>
</feature>
<feature type="binding site" evidence="2">
    <location>
        <begin position="103"/>
        <end position="106"/>
    </location>
    <ligand>
        <name>ATP</name>
        <dbReference type="ChEBI" id="CHEBI:30616"/>
    </ligand>
</feature>
<feature type="binding site" evidence="2">
    <location>
        <position position="104"/>
    </location>
    <ligand>
        <name>Mg(2+)</name>
        <dbReference type="ChEBI" id="CHEBI:18420"/>
        <note>catalytic</note>
    </ligand>
</feature>
<feature type="binding site" description="in other chain" evidence="2">
    <location>
        <begin position="126"/>
        <end position="128"/>
    </location>
    <ligand>
        <name>substrate</name>
        <note>ligand shared between dimeric partners</note>
    </ligand>
</feature>
<feature type="binding site" evidence="2">
    <location>
        <position position="163"/>
    </location>
    <ligand>
        <name>substrate</name>
        <note>ligand shared between dimeric partners</note>
    </ligand>
</feature>
<feature type="binding site" description="in other chain" evidence="2">
    <location>
        <begin position="170"/>
        <end position="172"/>
    </location>
    <ligand>
        <name>substrate</name>
        <note>ligand shared between dimeric partners</note>
    </ligand>
</feature>
<feature type="binding site" description="in other chain" evidence="2">
    <location>
        <position position="223"/>
    </location>
    <ligand>
        <name>substrate</name>
        <note>ligand shared between dimeric partners</note>
    </ligand>
</feature>
<feature type="binding site" evidence="2">
    <location>
        <position position="267"/>
    </location>
    <ligand>
        <name>substrate</name>
        <note>ligand shared between dimeric partners</note>
    </ligand>
</feature>
<feature type="binding site" description="in other chain" evidence="2">
    <location>
        <begin position="273"/>
        <end position="276"/>
    </location>
    <ligand>
        <name>substrate</name>
        <note>ligand shared between dimeric partners</note>
    </ligand>
</feature>
<feature type="site" description="Important for substrate specificity; cannot use PPi as phosphoryl donor" evidence="2">
    <location>
        <position position="105"/>
    </location>
</feature>
<reference key="1">
    <citation type="journal article" date="2002" name="J. Bacteriol.">
        <title>Whole-genome comparison of Mycobacterium tuberculosis clinical and laboratory strains.</title>
        <authorList>
            <person name="Fleischmann R.D."/>
            <person name="Alland D."/>
            <person name="Eisen J.A."/>
            <person name="Carpenter L."/>
            <person name="White O."/>
            <person name="Peterson J.D."/>
            <person name="DeBoy R.T."/>
            <person name="Dodson R.J."/>
            <person name="Gwinn M.L."/>
            <person name="Haft D.H."/>
            <person name="Hickey E.K."/>
            <person name="Kolonay J.F."/>
            <person name="Nelson W.C."/>
            <person name="Umayam L.A."/>
            <person name="Ermolaeva M.D."/>
            <person name="Salzberg S.L."/>
            <person name="Delcher A."/>
            <person name="Utterback T.R."/>
            <person name="Weidman J.F."/>
            <person name="Khouri H.M."/>
            <person name="Gill J."/>
            <person name="Mikula A."/>
            <person name="Bishai W."/>
            <person name="Jacobs W.R. Jr."/>
            <person name="Venter J.C."/>
            <person name="Fraser C.M."/>
        </authorList>
    </citation>
    <scope>NUCLEOTIDE SEQUENCE [LARGE SCALE GENOMIC DNA]</scope>
    <source>
        <strain>CDC 1551 / Oshkosh</strain>
    </source>
</reference>
<dbReference type="EC" id="2.7.1.11" evidence="2"/>
<dbReference type="EC" id="2.7.1.144" evidence="1"/>
<dbReference type="EMBL" id="AE000516">
    <property type="protein sequence ID" value="AAK47419.1"/>
    <property type="molecule type" value="Genomic_DNA"/>
</dbReference>
<dbReference type="PIR" id="E70856">
    <property type="entry name" value="E70856"/>
</dbReference>
<dbReference type="RefSeq" id="WP_003415251.1">
    <property type="nucleotide sequence ID" value="NZ_KK341227.1"/>
</dbReference>
<dbReference type="SMR" id="P9WID6"/>
<dbReference type="KEGG" id="mtc:MT3090"/>
<dbReference type="PATRIC" id="fig|83331.31.peg.3331"/>
<dbReference type="HOGENOM" id="CLU_020655_0_0_11"/>
<dbReference type="UniPathway" id="UPA00109">
    <property type="reaction ID" value="UER00182"/>
</dbReference>
<dbReference type="Proteomes" id="UP000001020">
    <property type="component" value="Chromosome"/>
</dbReference>
<dbReference type="GO" id="GO:0005945">
    <property type="term" value="C:6-phosphofructokinase complex"/>
    <property type="evidence" value="ECO:0007669"/>
    <property type="project" value="TreeGrafter"/>
</dbReference>
<dbReference type="GO" id="GO:0003872">
    <property type="term" value="F:6-phosphofructokinase activity"/>
    <property type="evidence" value="ECO:0007669"/>
    <property type="project" value="UniProtKB-UniRule"/>
</dbReference>
<dbReference type="GO" id="GO:0016208">
    <property type="term" value="F:AMP binding"/>
    <property type="evidence" value="ECO:0007669"/>
    <property type="project" value="TreeGrafter"/>
</dbReference>
<dbReference type="GO" id="GO:0005524">
    <property type="term" value="F:ATP binding"/>
    <property type="evidence" value="ECO:0007669"/>
    <property type="project" value="UniProtKB-KW"/>
</dbReference>
<dbReference type="GO" id="GO:0047334">
    <property type="term" value="F:diphosphate-fructose-6-phosphate 1-phosphotransferase activity"/>
    <property type="evidence" value="ECO:0007669"/>
    <property type="project" value="InterPro"/>
</dbReference>
<dbReference type="GO" id="GO:0070095">
    <property type="term" value="F:fructose-6-phosphate binding"/>
    <property type="evidence" value="ECO:0007669"/>
    <property type="project" value="TreeGrafter"/>
</dbReference>
<dbReference type="GO" id="GO:0042802">
    <property type="term" value="F:identical protein binding"/>
    <property type="evidence" value="ECO:0007669"/>
    <property type="project" value="TreeGrafter"/>
</dbReference>
<dbReference type="GO" id="GO:0046872">
    <property type="term" value="F:metal ion binding"/>
    <property type="evidence" value="ECO:0007669"/>
    <property type="project" value="UniProtKB-KW"/>
</dbReference>
<dbReference type="GO" id="GO:0048029">
    <property type="term" value="F:monosaccharide binding"/>
    <property type="evidence" value="ECO:0007669"/>
    <property type="project" value="TreeGrafter"/>
</dbReference>
<dbReference type="GO" id="GO:0009024">
    <property type="term" value="F:tagatose-6-phosphate kinase activity"/>
    <property type="evidence" value="ECO:0007669"/>
    <property type="project" value="RHEA"/>
</dbReference>
<dbReference type="GO" id="GO:0061621">
    <property type="term" value="P:canonical glycolysis"/>
    <property type="evidence" value="ECO:0007669"/>
    <property type="project" value="TreeGrafter"/>
</dbReference>
<dbReference type="GO" id="GO:0030388">
    <property type="term" value="P:fructose 1,6-bisphosphate metabolic process"/>
    <property type="evidence" value="ECO:0007669"/>
    <property type="project" value="TreeGrafter"/>
</dbReference>
<dbReference type="GO" id="GO:0006002">
    <property type="term" value="P:fructose 6-phosphate metabolic process"/>
    <property type="evidence" value="ECO:0007669"/>
    <property type="project" value="InterPro"/>
</dbReference>
<dbReference type="FunFam" id="3.40.50.460:FF:000005">
    <property type="entry name" value="ATP-dependent 6-phosphofructokinase"/>
    <property type="match status" value="1"/>
</dbReference>
<dbReference type="Gene3D" id="3.40.50.450">
    <property type="match status" value="1"/>
</dbReference>
<dbReference type="Gene3D" id="3.40.50.460">
    <property type="entry name" value="Phosphofructokinase domain"/>
    <property type="match status" value="1"/>
</dbReference>
<dbReference type="HAMAP" id="MF_01976">
    <property type="entry name" value="Phosphofructokinase_III"/>
    <property type="match status" value="1"/>
</dbReference>
<dbReference type="InterPro" id="IPR022953">
    <property type="entry name" value="ATP_PFK"/>
</dbReference>
<dbReference type="InterPro" id="IPR012003">
    <property type="entry name" value="ATP_PFK_prok-type"/>
</dbReference>
<dbReference type="InterPro" id="IPR015912">
    <property type="entry name" value="Phosphofructokinase_CS"/>
</dbReference>
<dbReference type="InterPro" id="IPR000023">
    <property type="entry name" value="Phosphofructokinase_dom"/>
</dbReference>
<dbReference type="InterPro" id="IPR012829">
    <property type="entry name" value="Phosphofructokinase_III"/>
</dbReference>
<dbReference type="InterPro" id="IPR035966">
    <property type="entry name" value="PKF_sf"/>
</dbReference>
<dbReference type="NCBIfam" id="TIGR02483">
    <property type="entry name" value="PFK_mixed"/>
    <property type="match status" value="1"/>
</dbReference>
<dbReference type="NCBIfam" id="NF002872">
    <property type="entry name" value="PRK03202.1"/>
    <property type="match status" value="1"/>
</dbReference>
<dbReference type="PANTHER" id="PTHR13697:SF52">
    <property type="entry name" value="ATP-DEPENDENT 6-PHOSPHOFRUCTOKINASE 3"/>
    <property type="match status" value="1"/>
</dbReference>
<dbReference type="PANTHER" id="PTHR13697">
    <property type="entry name" value="PHOSPHOFRUCTOKINASE"/>
    <property type="match status" value="1"/>
</dbReference>
<dbReference type="Pfam" id="PF00365">
    <property type="entry name" value="PFK"/>
    <property type="match status" value="1"/>
</dbReference>
<dbReference type="PIRSF" id="PIRSF000532">
    <property type="entry name" value="ATP_PFK_prok"/>
    <property type="match status" value="1"/>
</dbReference>
<dbReference type="PRINTS" id="PR00476">
    <property type="entry name" value="PHFRCTKINASE"/>
</dbReference>
<dbReference type="SUPFAM" id="SSF53784">
    <property type="entry name" value="Phosphofructokinase"/>
    <property type="match status" value="1"/>
</dbReference>
<dbReference type="PROSITE" id="PS00433">
    <property type="entry name" value="PHOSPHOFRUCTOKINASE"/>
    <property type="match status" value="1"/>
</dbReference>
<accession>P9WID6</accession>
<accession>L0TBI5</accession>
<accession>O53257</accession>
<accession>P65690</accession>
<comment type="function">
    <text evidence="1 2">Catalyzes the phosphorylation of D-fructose 6-phosphate to fructose 1,6-bisphosphate by ATP, the first committing step of glycolysis (By similarity). Can also catalyze the phosphorylation of tagatose-6-phosphate (By similarity).</text>
</comment>
<comment type="catalytic activity">
    <reaction evidence="2">
        <text>beta-D-fructose 6-phosphate + ATP = beta-D-fructose 1,6-bisphosphate + ADP + H(+)</text>
        <dbReference type="Rhea" id="RHEA:16109"/>
        <dbReference type="ChEBI" id="CHEBI:15378"/>
        <dbReference type="ChEBI" id="CHEBI:30616"/>
        <dbReference type="ChEBI" id="CHEBI:32966"/>
        <dbReference type="ChEBI" id="CHEBI:57634"/>
        <dbReference type="ChEBI" id="CHEBI:456216"/>
        <dbReference type="EC" id="2.7.1.11"/>
    </reaction>
</comment>
<comment type="catalytic activity">
    <reaction evidence="1">
        <text>D-tagatofuranose 6-phosphate + ATP = D-tagatofuranose 1,6-bisphosphate + ADP + H(+)</text>
        <dbReference type="Rhea" id="RHEA:12420"/>
        <dbReference type="ChEBI" id="CHEBI:15378"/>
        <dbReference type="ChEBI" id="CHEBI:30616"/>
        <dbReference type="ChEBI" id="CHEBI:58694"/>
        <dbReference type="ChEBI" id="CHEBI:58695"/>
        <dbReference type="ChEBI" id="CHEBI:456216"/>
        <dbReference type="EC" id="2.7.1.144"/>
    </reaction>
</comment>
<comment type="cofactor">
    <cofactor evidence="2">
        <name>Mg(2+)</name>
        <dbReference type="ChEBI" id="CHEBI:18420"/>
    </cofactor>
</comment>
<comment type="pathway">
    <text evidence="2">Carbohydrate degradation; glycolysis; D-glyceraldehyde 3-phosphate and glycerone phosphate from D-glucose: step 3/4.</text>
</comment>
<comment type="subunit">
    <text evidence="2">Homodimer or homotetramer.</text>
</comment>
<comment type="subcellular location">
    <subcellularLocation>
        <location evidence="2">Cytoplasm</location>
    </subcellularLocation>
</comment>
<comment type="similarity">
    <text evidence="2">Belongs to the phosphofructokinase type A (PFKA) family. Mixed-substrate PFK group III subfamily.</text>
</comment>
<proteinExistence type="inferred from homology"/>